<comment type="subcellular location">
    <subcellularLocation>
        <location evidence="1">Nucleus</location>
    </subcellularLocation>
</comment>
<comment type="similarity">
    <text evidence="4">Belongs to the Sp1 C2H2-type zinc-finger protein family.</text>
</comment>
<dbReference type="EMBL" id="AF490374">
    <property type="protein sequence ID" value="AAM08349.1"/>
    <property type="molecule type" value="mRNA"/>
</dbReference>
<dbReference type="EMBL" id="DQ534756">
    <property type="protein sequence ID" value="ABF82392.1"/>
    <property type="molecule type" value="Genomic_DNA"/>
</dbReference>
<dbReference type="EMBL" id="DQ534757">
    <property type="protein sequence ID" value="ABF82393.1"/>
    <property type="molecule type" value="mRNA"/>
</dbReference>
<dbReference type="EMBL" id="AC234644">
    <property type="status" value="NOT_ANNOTATED_CDS"/>
    <property type="molecule type" value="Genomic_DNA"/>
</dbReference>
<dbReference type="EMBL" id="CH236950">
    <property type="protein sequence ID" value="EAL24083.1"/>
    <property type="molecule type" value="Genomic_DNA"/>
</dbReference>
<dbReference type="EMBL" id="CH471070">
    <property type="protein sequence ID" value="EAW83773.1"/>
    <property type="molecule type" value="Genomic_DNA"/>
</dbReference>
<dbReference type="CCDS" id="CCDS5825.1"/>
<dbReference type="RefSeq" id="NP_619638.2">
    <property type="nucleotide sequence ID" value="NM_138693.4"/>
</dbReference>
<dbReference type="SMR" id="Q8TD94"/>
<dbReference type="FunCoup" id="Q8TD94">
    <property type="interactions" value="97"/>
</dbReference>
<dbReference type="STRING" id="9606.ENSP00000463287"/>
<dbReference type="GlyGen" id="Q8TD94">
    <property type="glycosylation" value="1 site"/>
</dbReference>
<dbReference type="iPTMnet" id="Q8TD94"/>
<dbReference type="PhosphoSitePlus" id="Q8TD94"/>
<dbReference type="BioMuta" id="KLF14"/>
<dbReference type="DMDM" id="32129442"/>
<dbReference type="jPOST" id="Q8TD94"/>
<dbReference type="MassIVE" id="Q8TD94"/>
<dbReference type="PaxDb" id="9606-ENSP00000463287"/>
<dbReference type="PeptideAtlas" id="Q8TD94"/>
<dbReference type="ProteomicsDB" id="74254"/>
<dbReference type="Antibodypedia" id="73306">
    <property type="antibodies" value="85 antibodies from 18 providers"/>
</dbReference>
<dbReference type="DNASU" id="136259"/>
<dbReference type="Ensembl" id="ENST00000583337.4">
    <property type="protein sequence ID" value="ENSP00000463287.1"/>
    <property type="gene ID" value="ENSG00000266265.4"/>
</dbReference>
<dbReference type="GeneID" id="136259"/>
<dbReference type="KEGG" id="hsa:136259"/>
<dbReference type="MANE-Select" id="ENST00000583337.4">
    <property type="protein sequence ID" value="ENSP00000463287.1"/>
    <property type="RefSeq nucleotide sequence ID" value="NM_138693.4"/>
    <property type="RefSeq protein sequence ID" value="NP_619638.2"/>
</dbReference>
<dbReference type="AGR" id="HGNC:23025"/>
<dbReference type="CTD" id="136259"/>
<dbReference type="DisGeNET" id="136259"/>
<dbReference type="GeneCards" id="KLF14"/>
<dbReference type="HGNC" id="HGNC:23025">
    <property type="gene designation" value="KLF14"/>
</dbReference>
<dbReference type="HPA" id="ENSG00000266265">
    <property type="expression patterns" value="Tissue enhanced (adrenal gland, testis)"/>
</dbReference>
<dbReference type="MIM" id="609393">
    <property type="type" value="gene"/>
</dbReference>
<dbReference type="neXtProt" id="NX_Q8TD94"/>
<dbReference type="OpenTargets" id="ENSG00000266265"/>
<dbReference type="PharmGKB" id="PA134868089"/>
<dbReference type="VEuPathDB" id="HostDB:ENSG00000266265"/>
<dbReference type="eggNOG" id="KOG1721">
    <property type="taxonomic scope" value="Eukaryota"/>
</dbReference>
<dbReference type="GeneTree" id="ENSGT00940000163415"/>
<dbReference type="InParanoid" id="Q8TD94"/>
<dbReference type="OMA" id="EVSGPMH"/>
<dbReference type="OrthoDB" id="6365676at2759"/>
<dbReference type="PAN-GO" id="Q8TD94">
    <property type="GO annotations" value="3 GO annotations based on evolutionary models"/>
</dbReference>
<dbReference type="PhylomeDB" id="Q8TD94"/>
<dbReference type="TreeFam" id="TF351003"/>
<dbReference type="PathwayCommons" id="Q8TD94"/>
<dbReference type="SIGNOR" id="Q8TD94"/>
<dbReference type="BioGRID-ORCS" id="136259">
    <property type="hits" value="15 hits in 1159 CRISPR screens"/>
</dbReference>
<dbReference type="GenomeRNAi" id="136259"/>
<dbReference type="Pharos" id="Q8TD94">
    <property type="development level" value="Tbio"/>
</dbReference>
<dbReference type="PRO" id="PR:Q8TD94"/>
<dbReference type="Proteomes" id="UP000005640">
    <property type="component" value="Chromosome 7"/>
</dbReference>
<dbReference type="RNAct" id="Q8TD94">
    <property type="molecule type" value="protein"/>
</dbReference>
<dbReference type="Bgee" id="ENSG00000266265">
    <property type="expression patterns" value="Expressed in primordial germ cell in gonad and 41 other cell types or tissues"/>
</dbReference>
<dbReference type="GO" id="GO:0000785">
    <property type="term" value="C:chromatin"/>
    <property type="evidence" value="ECO:0000247"/>
    <property type="project" value="NTNU_SB"/>
</dbReference>
<dbReference type="GO" id="GO:0005634">
    <property type="term" value="C:nucleus"/>
    <property type="evidence" value="ECO:0007669"/>
    <property type="project" value="UniProtKB-SubCell"/>
</dbReference>
<dbReference type="GO" id="GO:0003682">
    <property type="term" value="F:chromatin binding"/>
    <property type="evidence" value="ECO:0007669"/>
    <property type="project" value="Ensembl"/>
</dbReference>
<dbReference type="GO" id="GO:0000981">
    <property type="term" value="F:DNA-binding transcription factor activity, RNA polymerase II-specific"/>
    <property type="evidence" value="ECO:0000247"/>
    <property type="project" value="NTNU_SB"/>
</dbReference>
<dbReference type="GO" id="GO:0000978">
    <property type="term" value="F:RNA polymerase II cis-regulatory region sequence-specific DNA binding"/>
    <property type="evidence" value="ECO:0000318"/>
    <property type="project" value="GO_Central"/>
</dbReference>
<dbReference type="GO" id="GO:0043565">
    <property type="term" value="F:sequence-specific DNA binding"/>
    <property type="evidence" value="ECO:0000314"/>
    <property type="project" value="NTNU_SB"/>
</dbReference>
<dbReference type="GO" id="GO:1990837">
    <property type="term" value="F:sequence-specific double-stranded DNA binding"/>
    <property type="evidence" value="ECO:0000314"/>
    <property type="project" value="ARUK-UCL"/>
</dbReference>
<dbReference type="GO" id="GO:0008270">
    <property type="term" value="F:zinc ion binding"/>
    <property type="evidence" value="ECO:0007669"/>
    <property type="project" value="UniProtKB-KW"/>
</dbReference>
<dbReference type="GO" id="GO:1902070">
    <property type="term" value="P:positive regulation of sphingolipid mediated signaling pathway"/>
    <property type="evidence" value="ECO:0007669"/>
    <property type="project" value="Ensembl"/>
</dbReference>
<dbReference type="GO" id="GO:0045944">
    <property type="term" value="P:positive regulation of transcription by RNA polymerase II"/>
    <property type="evidence" value="ECO:0000314"/>
    <property type="project" value="NTNU_SB"/>
</dbReference>
<dbReference type="GO" id="GO:0006357">
    <property type="term" value="P:regulation of transcription by RNA polymerase II"/>
    <property type="evidence" value="ECO:0000318"/>
    <property type="project" value="GO_Central"/>
</dbReference>
<dbReference type="CDD" id="cd21576">
    <property type="entry name" value="KLF14_N"/>
    <property type="match status" value="1"/>
</dbReference>
<dbReference type="FunFam" id="3.30.160.60:FF:000595">
    <property type="entry name" value="Krueppel-like factor 14"/>
    <property type="match status" value="1"/>
</dbReference>
<dbReference type="FunFam" id="3.30.160.60:FF:000018">
    <property type="entry name" value="Krueppel-like factor 15"/>
    <property type="match status" value="1"/>
</dbReference>
<dbReference type="FunFam" id="3.30.160.60:FF:000232">
    <property type="entry name" value="Krueppel-like factor 9"/>
    <property type="match status" value="1"/>
</dbReference>
<dbReference type="Gene3D" id="3.30.160.60">
    <property type="entry name" value="Classic Zinc Finger"/>
    <property type="match status" value="3"/>
</dbReference>
<dbReference type="InterPro" id="IPR036236">
    <property type="entry name" value="Znf_C2H2_sf"/>
</dbReference>
<dbReference type="InterPro" id="IPR013087">
    <property type="entry name" value="Znf_C2H2_type"/>
</dbReference>
<dbReference type="PANTHER" id="PTHR23235:SF59">
    <property type="entry name" value="KRUEPPEL-LIKE FACTOR 14"/>
    <property type="match status" value="1"/>
</dbReference>
<dbReference type="PANTHER" id="PTHR23235">
    <property type="entry name" value="KRUEPPEL-LIKE TRANSCRIPTION FACTOR"/>
    <property type="match status" value="1"/>
</dbReference>
<dbReference type="Pfam" id="PF00096">
    <property type="entry name" value="zf-C2H2"/>
    <property type="match status" value="3"/>
</dbReference>
<dbReference type="SMART" id="SM00355">
    <property type="entry name" value="ZnF_C2H2"/>
    <property type="match status" value="3"/>
</dbReference>
<dbReference type="SUPFAM" id="SSF57667">
    <property type="entry name" value="beta-beta-alpha zinc fingers"/>
    <property type="match status" value="2"/>
</dbReference>
<dbReference type="PROSITE" id="PS00028">
    <property type="entry name" value="ZINC_FINGER_C2H2_1"/>
    <property type="match status" value="3"/>
</dbReference>
<dbReference type="PROSITE" id="PS50157">
    <property type="entry name" value="ZINC_FINGER_C2H2_2"/>
    <property type="match status" value="3"/>
</dbReference>
<keyword id="KW-0238">DNA-binding</keyword>
<keyword id="KW-0479">Metal-binding</keyword>
<keyword id="KW-0539">Nucleus</keyword>
<keyword id="KW-1267">Proteomics identification</keyword>
<keyword id="KW-1185">Reference proteome</keyword>
<keyword id="KW-0677">Repeat</keyword>
<keyword id="KW-0804">Transcription</keyword>
<keyword id="KW-0805">Transcription regulation</keyword>
<keyword id="KW-0862">Zinc</keyword>
<keyword id="KW-0863">Zinc-finger</keyword>
<proteinExistence type="evidence at protein level"/>
<evidence type="ECO:0000250" key="1"/>
<evidence type="ECO:0000255" key="2">
    <source>
        <dbReference type="PROSITE-ProRule" id="PRU00042"/>
    </source>
</evidence>
<evidence type="ECO:0000256" key="3">
    <source>
        <dbReference type="SAM" id="MobiDB-lite"/>
    </source>
</evidence>
<evidence type="ECO:0000305" key="4"/>
<accession>Q8TD94</accession>
<accession>A0A075B756</accession>
<accession>A4D1N0</accession>
<accession>Q19A42</accession>
<accession>Q19A43</accession>
<gene>
    <name type="primary">KLF14</name>
    <name type="synonym">BTEB5</name>
</gene>
<sequence>MSAAVACLDYFAAECLVSMSAGAVVHRRPPDPEGAGGAAGSEVGAAPPESALPGPGPPGPASVPQLPQVPAPSPGAGGAAPHLLAASVWADLRGSSGEGSWENSGEAPRASSGFSDPIPCSVQTPCSELAPASGAAAVCAPESSSDAPAVPSAPAAPGAPAASGGFSGGALGAGPAPAADQAPRRRSVTPAAKRHQCPFPGCTKAYYKSSHLKSHQRTHTGERPFSCDWLDCDKKFTRSDELARHYRTHTGEKRFSCPLCPKQFSRSDHLTKHARRHPTYHPDMIEYRGRRRTPRIDPPLTSEVESSASGSGPGPAPSFTTCL</sequence>
<reference key="1">
    <citation type="submission" date="2002-03" db="EMBL/GenBank/DDBJ databases">
        <title>Identification of BTEB5, a new member of the BTEB subfamily of Sp1-like proteins.</title>
        <authorList>
            <person name="Kaczynski J.A."/>
            <person name="Urrutia R.A."/>
        </authorList>
    </citation>
    <scope>NUCLEOTIDE SEQUENCE [MRNA]</scope>
</reference>
<reference key="2">
    <citation type="submission" date="2006-06" db="EMBL/GenBank/DDBJ databases">
        <title>The centre for applied genomics genome annotation project.</title>
        <authorList>
            <person name="Parker-Katiraee L."/>
            <person name="Scherer S.W."/>
        </authorList>
    </citation>
    <scope>NUCLEOTIDE SEQUENCE [GENOMIC DNA / MRNA]</scope>
</reference>
<reference key="3">
    <citation type="journal article" date="2003" name="Nature">
        <title>The DNA sequence of human chromosome 7.</title>
        <authorList>
            <person name="Hillier L.W."/>
            <person name="Fulton R.S."/>
            <person name="Fulton L.A."/>
            <person name="Graves T.A."/>
            <person name="Pepin K.H."/>
            <person name="Wagner-McPherson C."/>
            <person name="Layman D."/>
            <person name="Maas J."/>
            <person name="Jaeger S."/>
            <person name="Walker R."/>
            <person name="Wylie K."/>
            <person name="Sekhon M."/>
            <person name="Becker M.C."/>
            <person name="O'Laughlin M.D."/>
            <person name="Schaller M.E."/>
            <person name="Fewell G.A."/>
            <person name="Delehaunty K.D."/>
            <person name="Miner T.L."/>
            <person name="Nash W.E."/>
            <person name="Cordes M."/>
            <person name="Du H."/>
            <person name="Sun H."/>
            <person name="Edwards J."/>
            <person name="Bradshaw-Cordum H."/>
            <person name="Ali J."/>
            <person name="Andrews S."/>
            <person name="Isak A."/>
            <person name="Vanbrunt A."/>
            <person name="Nguyen C."/>
            <person name="Du F."/>
            <person name="Lamar B."/>
            <person name="Courtney L."/>
            <person name="Kalicki J."/>
            <person name="Ozersky P."/>
            <person name="Bielicki L."/>
            <person name="Scott K."/>
            <person name="Holmes A."/>
            <person name="Harkins R."/>
            <person name="Harris A."/>
            <person name="Strong C.M."/>
            <person name="Hou S."/>
            <person name="Tomlinson C."/>
            <person name="Dauphin-Kohlberg S."/>
            <person name="Kozlowicz-Reilly A."/>
            <person name="Leonard S."/>
            <person name="Rohlfing T."/>
            <person name="Rock S.M."/>
            <person name="Tin-Wollam A.-M."/>
            <person name="Abbott A."/>
            <person name="Minx P."/>
            <person name="Maupin R."/>
            <person name="Strowmatt C."/>
            <person name="Latreille P."/>
            <person name="Miller N."/>
            <person name="Johnson D."/>
            <person name="Murray J."/>
            <person name="Woessner J.P."/>
            <person name="Wendl M.C."/>
            <person name="Yang S.-P."/>
            <person name="Schultz B.R."/>
            <person name="Wallis J.W."/>
            <person name="Spieth J."/>
            <person name="Bieri T.A."/>
            <person name="Nelson J.O."/>
            <person name="Berkowicz N."/>
            <person name="Wohldmann P.E."/>
            <person name="Cook L.L."/>
            <person name="Hickenbotham M.T."/>
            <person name="Eldred J."/>
            <person name="Williams D."/>
            <person name="Bedell J.A."/>
            <person name="Mardis E.R."/>
            <person name="Clifton S.W."/>
            <person name="Chissoe S.L."/>
            <person name="Marra M.A."/>
            <person name="Raymond C."/>
            <person name="Haugen E."/>
            <person name="Gillett W."/>
            <person name="Zhou Y."/>
            <person name="James R."/>
            <person name="Phelps K."/>
            <person name="Iadanoto S."/>
            <person name="Bubb K."/>
            <person name="Simms E."/>
            <person name="Levy R."/>
            <person name="Clendenning J."/>
            <person name="Kaul R."/>
            <person name="Kent W.J."/>
            <person name="Furey T.S."/>
            <person name="Baertsch R.A."/>
            <person name="Brent M.R."/>
            <person name="Keibler E."/>
            <person name="Flicek P."/>
            <person name="Bork P."/>
            <person name="Suyama M."/>
            <person name="Bailey J.A."/>
            <person name="Portnoy M.E."/>
            <person name="Torrents D."/>
            <person name="Chinwalla A.T."/>
            <person name="Gish W.R."/>
            <person name="Eddy S.R."/>
            <person name="McPherson J.D."/>
            <person name="Olson M.V."/>
            <person name="Eichler E.E."/>
            <person name="Green E.D."/>
            <person name="Waterston R.H."/>
            <person name="Wilson R.K."/>
        </authorList>
    </citation>
    <scope>NUCLEOTIDE SEQUENCE [LARGE SCALE GENOMIC DNA]</scope>
</reference>
<reference key="4">
    <citation type="submission" date="2005-07" db="EMBL/GenBank/DDBJ databases">
        <authorList>
            <person name="Mural R.J."/>
            <person name="Istrail S."/>
            <person name="Sutton G.G."/>
            <person name="Florea L."/>
            <person name="Halpern A.L."/>
            <person name="Mobarry C.M."/>
            <person name="Lippert R."/>
            <person name="Walenz B."/>
            <person name="Shatkay H."/>
            <person name="Dew I."/>
            <person name="Miller J.R."/>
            <person name="Flanigan M.J."/>
            <person name="Edwards N.J."/>
            <person name="Bolanos R."/>
            <person name="Fasulo D."/>
            <person name="Halldorsson B.V."/>
            <person name="Hannenhalli S."/>
            <person name="Turner R."/>
            <person name="Yooseph S."/>
            <person name="Lu F."/>
            <person name="Nusskern D.R."/>
            <person name="Shue B.C."/>
            <person name="Zheng X.H."/>
            <person name="Zhong F."/>
            <person name="Delcher A.L."/>
            <person name="Huson D.H."/>
            <person name="Kravitz S.A."/>
            <person name="Mouchard L."/>
            <person name="Reinert K."/>
            <person name="Remington K.A."/>
            <person name="Clark A.G."/>
            <person name="Waterman M.S."/>
            <person name="Eichler E.E."/>
            <person name="Adams M.D."/>
            <person name="Hunkapiller M.W."/>
            <person name="Myers E.W."/>
            <person name="Venter J.C."/>
        </authorList>
    </citation>
    <scope>NUCLEOTIDE SEQUENCE [LARGE SCALE GENOMIC DNA]</scope>
</reference>
<organism>
    <name type="scientific">Homo sapiens</name>
    <name type="common">Human</name>
    <dbReference type="NCBI Taxonomy" id="9606"/>
    <lineage>
        <taxon>Eukaryota</taxon>
        <taxon>Metazoa</taxon>
        <taxon>Chordata</taxon>
        <taxon>Craniata</taxon>
        <taxon>Vertebrata</taxon>
        <taxon>Euteleostomi</taxon>
        <taxon>Mammalia</taxon>
        <taxon>Eutheria</taxon>
        <taxon>Euarchontoglires</taxon>
        <taxon>Primates</taxon>
        <taxon>Haplorrhini</taxon>
        <taxon>Catarrhini</taxon>
        <taxon>Hominidae</taxon>
        <taxon>Homo</taxon>
    </lineage>
</organism>
<name>KLF14_HUMAN</name>
<feature type="chain" id="PRO_0000047186" description="Krueppel-like factor 14">
    <location>
        <begin position="1"/>
        <end position="323"/>
    </location>
</feature>
<feature type="zinc finger region" description="C2H2-type 1" evidence="2">
    <location>
        <begin position="195"/>
        <end position="224"/>
    </location>
</feature>
<feature type="zinc finger region" description="C2H2-type 2" evidence="2">
    <location>
        <begin position="225"/>
        <end position="254"/>
    </location>
</feature>
<feature type="zinc finger region" description="C2H2-type 3" evidence="2">
    <location>
        <begin position="255"/>
        <end position="282"/>
    </location>
</feature>
<feature type="region of interest" description="Disordered" evidence="3">
    <location>
        <begin position="27"/>
        <end position="80"/>
    </location>
</feature>
<feature type="region of interest" description="Disordered" evidence="3">
    <location>
        <begin position="94"/>
        <end position="116"/>
    </location>
</feature>
<feature type="region of interest" description="Disordered" evidence="3">
    <location>
        <begin position="142"/>
        <end position="161"/>
    </location>
</feature>
<feature type="region of interest" description="Disordered" evidence="3">
    <location>
        <begin position="166"/>
        <end position="195"/>
    </location>
</feature>
<feature type="region of interest" description="Disordered" evidence="3">
    <location>
        <begin position="279"/>
        <end position="323"/>
    </location>
</feature>
<feature type="compositionally biased region" description="Low complexity" evidence="3">
    <location>
        <begin position="40"/>
        <end position="53"/>
    </location>
</feature>
<feature type="compositionally biased region" description="Pro residues" evidence="3">
    <location>
        <begin position="54"/>
        <end position="73"/>
    </location>
</feature>
<feature type="compositionally biased region" description="Low complexity" evidence="3">
    <location>
        <begin position="94"/>
        <end position="106"/>
    </location>
</feature>
<feature type="compositionally biased region" description="Basic residues" evidence="3">
    <location>
        <begin position="184"/>
        <end position="195"/>
    </location>
</feature>
<feature type="sequence variant" id="VAR_052718" description="In dbSNP:rs35770036.">
    <original>A</original>
    <variation>P</variation>
    <location>
        <position position="173"/>
    </location>
</feature>
<feature type="sequence conflict" description="In Ref. 1; AAM08349 and 4; EAL24083/EAW83773." ref="1 4">
    <original>P</original>
    <variation>H</variation>
    <location>
        <position position="47"/>
    </location>
</feature>
<feature type="sequence conflict" description="In Ref. 2; ABF82392/ABF82393." evidence="4" ref="2">
    <original>P</original>
    <variation>Q</variation>
    <location>
        <position position="47"/>
    </location>
</feature>
<feature type="sequence conflict" description="In Ref. 1; AAM08349, 2; ABF82392/ABF82393 and 4; EAL24083/EAW83773." ref="1 2 4">
    <original>P</original>
    <variation>S</variation>
    <location>
        <position position="58"/>
    </location>
</feature>
<protein>
    <recommendedName>
        <fullName>Krueppel-like factor 14</fullName>
    </recommendedName>
    <alternativeName>
        <fullName>Basic transcription element-binding protein 5</fullName>
        <shortName>BTE-binding protein 5</shortName>
    </alternativeName>
    <alternativeName>
        <fullName>Transcription factor BTEB5</fullName>
    </alternativeName>
</protein>